<organism>
    <name type="scientific">Staphylococcus aureus (strain NCTC 8325 / PS 47)</name>
    <dbReference type="NCBI Taxonomy" id="93061"/>
    <lineage>
        <taxon>Bacteria</taxon>
        <taxon>Bacillati</taxon>
        <taxon>Bacillota</taxon>
        <taxon>Bacilli</taxon>
        <taxon>Bacillales</taxon>
        <taxon>Staphylococcaceae</taxon>
        <taxon>Staphylococcus</taxon>
    </lineage>
</organism>
<sequence>MKKLTAAAIATMGFATFTMAHQADAAETTNTQQAHTQMSTQSQDVSYGTYYTIDSNGDYHHTPDGNWNQAMFDNKEYSYTFVDAQGHTHYFYNCYPKNANANGSGQTYVNPATAGDNNDYTASQSQQHINQYGYQSNVGPDASYYSHSNNNQAYNSHDGNGKVNYPNGTSNQNGGSASKATASGHAKDASWLTSRKQLQPYGQYHGGGAHYGVDYAMPENSPVYSLTDGTVVQAGWSNYGGGNQVTIKEANSNNYQWYMHNNRLTVSAGDKVKAGDQIAYSGSTGNSTAPHVHFQRMSGGIGNQYAVDPTSYLQSR</sequence>
<comment type="function">
    <text evidence="2 5">Peptidoglycan hydrolase (autolysin) specifically acting on polyglycine interpeptide bridges of the cell wall peptidoglycan.</text>
</comment>
<comment type="catalytic activity">
    <reaction>
        <text>Hydrolysis of the -Gly-|-Gly- bond in the pentaglycine inter-peptide link joining staphylococcal cell wall peptidoglycans.</text>
        <dbReference type="EC" id="3.4.24.75"/>
    </reaction>
</comment>
<comment type="cofactor">
    <cofactor evidence="3">
        <name>Zn(2+)</name>
        <dbReference type="ChEBI" id="CHEBI:29105"/>
    </cofactor>
    <text evidence="3">Binds 1 zinc ion per subunit.</text>
</comment>
<comment type="activity regulation">
    <text evidence="2">Completely inhibited by DEPC, HgCl(2), ammonium sulfate and glucosamine. Inhibited by 1,10-phenanthroline at concentrations as low as 1 mM. Glycine hydroxamate, Zn(2+), Hg(2+) and EDTA inhibit the activity at 10 mM. Sodium chloride (NaCl) and potassium chloride (KCl) inhibit protease activity at 100 mM.</text>
</comment>
<comment type="biophysicochemical properties">
    <phDependence>
        <text evidence="2">Optimum pH is 5-8.</text>
    </phDependence>
    <temperatureDependence>
        <text evidence="2">Thermostable at 100 degrees Celsius for 15 minutes, but loses activity at the same temperature within 30 minutes.</text>
    </temperatureDependence>
</comment>
<comment type="subunit">
    <text>Monomer.</text>
</comment>
<comment type="subcellular location">
    <subcellularLocation>
        <location evidence="2 4">Secreted</location>
    </subcellularLocation>
</comment>
<comment type="induction">
    <text evidence="4">Repressed by MgrA. More protein is secreted in a double secG/secY2 mutant (at protein level).</text>
</comment>
<comment type="similarity">
    <text evidence="7">Belongs to the peptidase M23B family.</text>
</comment>
<comment type="sequence caution" evidence="7">
    <conflict type="erroneous initiation">
        <sequence resource="EMBL-CDS" id="AAB62278"/>
    </conflict>
    <text>Extended N-terminus.</text>
</comment>
<name>LYTM_STAA8</name>
<protein>
    <recommendedName>
        <fullName>Glycyl-glycine endopeptidase LytM</fullName>
        <ecNumber>3.4.24.75</ecNumber>
    </recommendedName>
    <alternativeName>
        <fullName>Autolysin LytM</fullName>
    </alternativeName>
</protein>
<dbReference type="EC" id="3.4.24.75"/>
<dbReference type="EMBL" id="L77194">
    <property type="protein sequence ID" value="AAB62278.1"/>
    <property type="status" value="ALT_INIT"/>
    <property type="molecule type" value="Genomic_DNA"/>
</dbReference>
<dbReference type="EMBL" id="CP000253">
    <property type="protein sequence ID" value="ABD29423.1"/>
    <property type="molecule type" value="Genomic_DNA"/>
</dbReference>
<dbReference type="RefSeq" id="WP_000736798.1">
    <property type="nucleotide sequence ID" value="NZ_LS483365.1"/>
</dbReference>
<dbReference type="RefSeq" id="YP_498843.1">
    <property type="nucleotide sequence ID" value="NC_007795.1"/>
</dbReference>
<dbReference type="PDB" id="1QWY">
    <property type="method" value="X-ray"/>
    <property type="resolution" value="1.30 A"/>
    <property type="chains" value="A=26-316"/>
</dbReference>
<dbReference type="PDB" id="2B0P">
    <property type="method" value="X-ray"/>
    <property type="resolution" value="1.50 A"/>
    <property type="chains" value="A/B=185-316"/>
</dbReference>
<dbReference type="PDB" id="2B13">
    <property type="method" value="X-ray"/>
    <property type="resolution" value="1.55 A"/>
    <property type="chains" value="A/B=185-316"/>
</dbReference>
<dbReference type="PDB" id="2B44">
    <property type="method" value="X-ray"/>
    <property type="resolution" value="1.83 A"/>
    <property type="chains" value="A/B=185-316"/>
</dbReference>
<dbReference type="PDB" id="4ZYB">
    <property type="method" value="X-ray"/>
    <property type="resolution" value="1.50 A"/>
    <property type="chains" value="A/B/C/D=185-316"/>
</dbReference>
<dbReference type="PDBsum" id="1QWY"/>
<dbReference type="PDBsum" id="2B0P"/>
<dbReference type="PDBsum" id="2B13"/>
<dbReference type="PDBsum" id="2B44"/>
<dbReference type="PDBsum" id="4ZYB"/>
<dbReference type="SMR" id="O33599"/>
<dbReference type="STRING" id="93061.SAOUHSC_00248"/>
<dbReference type="MEROPS" id="M23.013"/>
<dbReference type="PaxDb" id="1280-SAXN108_0256"/>
<dbReference type="GeneID" id="3919268"/>
<dbReference type="KEGG" id="sao:SAOUHSC_00248"/>
<dbReference type="PATRIC" id="fig|93061.5.peg.228"/>
<dbReference type="eggNOG" id="COG0739">
    <property type="taxonomic scope" value="Bacteria"/>
</dbReference>
<dbReference type="HOGENOM" id="CLU_073067_0_0_9"/>
<dbReference type="OrthoDB" id="9805799at2"/>
<dbReference type="EvolutionaryTrace" id="O33599"/>
<dbReference type="PRO" id="PR:O33599"/>
<dbReference type="Proteomes" id="UP000008816">
    <property type="component" value="Chromosome"/>
</dbReference>
<dbReference type="GO" id="GO:0005576">
    <property type="term" value="C:extracellular region"/>
    <property type="evidence" value="ECO:0007669"/>
    <property type="project" value="UniProtKB-SubCell"/>
</dbReference>
<dbReference type="GO" id="GO:0050897">
    <property type="term" value="F:cobalt ion binding"/>
    <property type="evidence" value="ECO:0000315"/>
    <property type="project" value="CAFA"/>
</dbReference>
<dbReference type="GO" id="GO:0030145">
    <property type="term" value="F:manganese ion binding"/>
    <property type="evidence" value="ECO:0000315"/>
    <property type="project" value="CAFA"/>
</dbReference>
<dbReference type="GO" id="GO:0004222">
    <property type="term" value="F:metalloendopeptidase activity"/>
    <property type="evidence" value="ECO:0000315"/>
    <property type="project" value="CAFA"/>
</dbReference>
<dbReference type="GO" id="GO:0016151">
    <property type="term" value="F:nickel cation binding"/>
    <property type="evidence" value="ECO:0000315"/>
    <property type="project" value="CAFA"/>
</dbReference>
<dbReference type="GO" id="GO:0008270">
    <property type="term" value="F:zinc ion binding"/>
    <property type="evidence" value="ECO:0000315"/>
    <property type="project" value="CAFA"/>
</dbReference>
<dbReference type="GO" id="GO:0071555">
    <property type="term" value="P:cell wall organization"/>
    <property type="evidence" value="ECO:0007669"/>
    <property type="project" value="UniProtKB-KW"/>
</dbReference>
<dbReference type="GO" id="GO:0043171">
    <property type="term" value="P:peptide catabolic process"/>
    <property type="evidence" value="ECO:0000315"/>
    <property type="project" value="CAFA"/>
</dbReference>
<dbReference type="GO" id="GO:0006508">
    <property type="term" value="P:proteolysis"/>
    <property type="evidence" value="ECO:0007669"/>
    <property type="project" value="UniProtKB-KW"/>
</dbReference>
<dbReference type="CDD" id="cd12797">
    <property type="entry name" value="M23_peptidase"/>
    <property type="match status" value="1"/>
</dbReference>
<dbReference type="DisProt" id="DP00352"/>
<dbReference type="FunFam" id="2.70.70.10:FF:000027">
    <property type="entry name" value="Glycyl-glycine endopeptidase LytM"/>
    <property type="match status" value="1"/>
</dbReference>
<dbReference type="Gene3D" id="2.40.50.290">
    <property type="match status" value="1"/>
</dbReference>
<dbReference type="Gene3D" id="2.70.70.10">
    <property type="entry name" value="Glucose Permease (Domain IIA)"/>
    <property type="match status" value="1"/>
</dbReference>
<dbReference type="InterPro" id="IPR050570">
    <property type="entry name" value="Cell_wall_metabolism_enzyme"/>
</dbReference>
<dbReference type="InterPro" id="IPR011055">
    <property type="entry name" value="Dup_hybrid_motif"/>
</dbReference>
<dbReference type="InterPro" id="IPR016047">
    <property type="entry name" value="Peptidase_M23"/>
</dbReference>
<dbReference type="PANTHER" id="PTHR21666:SF270">
    <property type="entry name" value="MUREIN HYDROLASE ACTIVATOR ENVC"/>
    <property type="match status" value="1"/>
</dbReference>
<dbReference type="PANTHER" id="PTHR21666">
    <property type="entry name" value="PEPTIDASE-RELATED"/>
    <property type="match status" value="1"/>
</dbReference>
<dbReference type="Pfam" id="PF01551">
    <property type="entry name" value="Peptidase_M23"/>
    <property type="match status" value="1"/>
</dbReference>
<dbReference type="SUPFAM" id="SSF51261">
    <property type="entry name" value="Duplicated hybrid motif"/>
    <property type="match status" value="1"/>
</dbReference>
<evidence type="ECO:0000256" key="1">
    <source>
        <dbReference type="SAM" id="MobiDB-lite"/>
    </source>
</evidence>
<evidence type="ECO:0000269" key="2">
    <source>
    </source>
</evidence>
<evidence type="ECO:0000269" key="3">
    <source>
    </source>
</evidence>
<evidence type="ECO:0000269" key="4">
    <source>
    </source>
</evidence>
<evidence type="ECO:0000269" key="5">
    <source>
    </source>
</evidence>
<evidence type="ECO:0000269" key="6">
    <source>
    </source>
</evidence>
<evidence type="ECO:0000305" key="7"/>
<evidence type="ECO:0007744" key="8">
    <source>
        <dbReference type="PDB" id="1QWY"/>
    </source>
</evidence>
<evidence type="ECO:0007829" key="9">
    <source>
        <dbReference type="PDB" id="1QWY"/>
    </source>
</evidence>
<proteinExistence type="evidence at protein level"/>
<gene>
    <name type="primary">lytM</name>
    <name type="ordered locus">SAOUHSC_00248</name>
</gene>
<accession>O33599</accession>
<accession>Q2G197</accession>
<feature type="signal peptide" evidence="6">
    <location>
        <begin position="1"/>
        <end position="25"/>
    </location>
</feature>
<feature type="chain" id="PRO_0000026819" description="Glycyl-glycine endopeptidase LytM">
    <location>
        <begin position="26"/>
        <end position="316"/>
    </location>
</feature>
<feature type="region of interest" description="Disordered" evidence="1">
    <location>
        <begin position="133"/>
        <end position="189"/>
    </location>
</feature>
<feature type="compositionally biased region" description="Polar residues" evidence="1">
    <location>
        <begin position="145"/>
        <end position="158"/>
    </location>
</feature>
<feature type="compositionally biased region" description="Polar residues" evidence="1">
    <location>
        <begin position="166"/>
        <end position="181"/>
    </location>
</feature>
<feature type="binding site" evidence="3 8">
    <location>
        <position position="117"/>
    </location>
    <ligand>
        <name>Zn(2+)</name>
        <dbReference type="ChEBI" id="CHEBI:29105"/>
    </ligand>
</feature>
<feature type="binding site" evidence="3 8">
    <location>
        <position position="210"/>
    </location>
    <ligand>
        <name>Zn(2+)</name>
        <dbReference type="ChEBI" id="CHEBI:29105"/>
    </ligand>
</feature>
<feature type="binding site" evidence="3 8">
    <location>
        <position position="214"/>
    </location>
    <ligand>
        <name>Zn(2+)</name>
        <dbReference type="ChEBI" id="CHEBI:29105"/>
    </ligand>
</feature>
<feature type="binding site" evidence="3 8">
    <location>
        <position position="293"/>
    </location>
    <ligand>
        <name>Zn(2+)</name>
        <dbReference type="ChEBI" id="CHEBI:29105"/>
    </ligand>
</feature>
<feature type="mutagenesis site" description="Activates the enzyme." evidence="3">
    <original>N</original>
    <variation>A</variation>
    <location>
        <position position="117"/>
    </location>
</feature>
<feature type="mutagenesis site" description="Inactivates the enzyme." evidence="3">
    <original>H</original>
    <variation>A</variation>
    <location>
        <position position="210"/>
    </location>
</feature>
<feature type="mutagenesis site" description="Inactivates the enzyme." evidence="3">
    <original>D</original>
    <variation>A</variation>
    <location>
        <position position="214"/>
    </location>
</feature>
<feature type="mutagenesis site" description="Inactivates the enzyme." evidence="3">
    <original>H</original>
    <variation>A</variation>
    <location>
        <position position="291"/>
    </location>
</feature>
<feature type="mutagenesis site" description="Yields insoluble protein." evidence="3">
    <original>H</original>
    <variation>A</variation>
    <location>
        <position position="293"/>
    </location>
</feature>
<feature type="sequence conflict" description="In Ref. 1; AAB62278." evidence="7" ref="1">
    <original>A</original>
    <variation>S</variation>
    <location>
        <position position="25"/>
    </location>
</feature>
<feature type="sequence conflict" description="In Ref. 1; AAB62278." evidence="7" ref="1">
    <original>A</original>
    <variation>R</variation>
    <location>
        <position position="182"/>
    </location>
</feature>
<feature type="strand" evidence="9">
    <location>
        <begin position="49"/>
        <end position="53"/>
    </location>
</feature>
<feature type="strand" evidence="9">
    <location>
        <begin position="59"/>
        <end position="65"/>
    </location>
</feature>
<feature type="helix" evidence="9">
    <location>
        <begin position="69"/>
        <end position="73"/>
    </location>
</feature>
<feature type="strand" evidence="9">
    <location>
        <begin position="79"/>
        <end position="82"/>
    </location>
</feature>
<feature type="strand" evidence="9">
    <location>
        <begin position="88"/>
        <end position="93"/>
    </location>
</feature>
<feature type="helix" evidence="9">
    <location>
        <begin position="126"/>
        <end position="132"/>
    </location>
</feature>
<feature type="helix" evidence="9">
    <location>
        <begin position="142"/>
        <end position="144"/>
    </location>
</feature>
<feature type="helix" evidence="9">
    <location>
        <begin position="190"/>
        <end position="193"/>
    </location>
</feature>
<feature type="strand" evidence="9">
    <location>
        <begin position="197"/>
        <end position="199"/>
    </location>
</feature>
<feature type="strand" evidence="9">
    <location>
        <begin position="201"/>
        <end position="203"/>
    </location>
</feature>
<feature type="strand" evidence="9">
    <location>
        <begin position="207"/>
        <end position="210"/>
    </location>
</feature>
<feature type="strand" evidence="9">
    <location>
        <begin position="212"/>
        <end position="216"/>
    </location>
</feature>
<feature type="strand" evidence="9">
    <location>
        <begin position="222"/>
        <end position="224"/>
    </location>
</feature>
<feature type="strand" evidence="9">
    <location>
        <begin position="226"/>
        <end position="237"/>
    </location>
</feature>
<feature type="turn" evidence="9">
    <location>
        <begin position="238"/>
        <end position="241"/>
    </location>
</feature>
<feature type="strand" evidence="9">
    <location>
        <begin position="242"/>
        <end position="249"/>
    </location>
</feature>
<feature type="strand" evidence="9">
    <location>
        <begin position="252"/>
        <end position="264"/>
    </location>
</feature>
<feature type="strand" evidence="9">
    <location>
        <begin position="277"/>
        <end position="280"/>
    </location>
</feature>
<feature type="strand" evidence="9">
    <location>
        <begin position="288"/>
        <end position="302"/>
    </location>
</feature>
<feature type="helix" evidence="9">
    <location>
        <begin position="303"/>
        <end position="305"/>
    </location>
</feature>
<feature type="helix" evidence="9">
    <location>
        <begin position="310"/>
        <end position="313"/>
    </location>
</feature>
<reference key="1">
    <citation type="journal article" date="1997" name="J. Bacteriol.">
        <title>Molecular cloning, sequencing, and expression of lytM, a unique autolytic gene of Staphylococcus aureus.</title>
        <authorList>
            <person name="Ramadurai L."/>
            <person name="Jayaswal R.K."/>
        </authorList>
    </citation>
    <scope>NUCLEOTIDE SEQUENCE [GENOMIC DNA]</scope>
    <scope>PROTEIN SEQUENCE OF 26-40</scope>
</reference>
<reference key="2">
    <citation type="book" date="2006" name="Gram positive pathogens, 2nd edition">
        <title>The Staphylococcus aureus NCTC 8325 genome.</title>
        <editorList>
            <person name="Fischetti V."/>
            <person name="Novick R."/>
            <person name="Ferretti J."/>
            <person name="Portnoy D."/>
            <person name="Rood J."/>
        </editorList>
        <authorList>
            <person name="Gillaspy A.F."/>
            <person name="Worrell V."/>
            <person name="Orvis J."/>
            <person name="Roe B.A."/>
            <person name="Dyer D.W."/>
            <person name="Iandolo J.J."/>
        </authorList>
    </citation>
    <scope>NUCLEOTIDE SEQUENCE [LARGE SCALE GENOMIC DNA]</scope>
    <source>
        <strain>NCTC 8325 / PS 47</strain>
    </source>
</reference>
<reference key="3">
    <citation type="journal article" date="1993" name="J. Bacteriol.">
        <title>Isolation and characterization of autolysis-defective mutants of Staphylococcus aureus created by Tn917-lacZ mutagenesis.</title>
        <authorList>
            <person name="Mani N."/>
            <person name="Tobin P."/>
            <person name="Jayaswal R.K."/>
        </authorList>
    </citation>
    <scope>FUNCTION</scope>
</reference>
<reference key="4">
    <citation type="journal article" date="1999" name="Microbiology">
        <title>Characterization of a chromosomally encoded glycylglycine endopeptidase of Staphylococcus aureus.</title>
        <authorList>
            <person name="Ramadurai L."/>
            <person name="Lockwood K.J."/>
            <person name="Nadakavukaren M.J."/>
            <person name="Jayaswal R.K."/>
        </authorList>
    </citation>
    <scope>FUNCTION</scope>
    <scope>BIOPHYSICOCHEMICAL PROPERTIES</scope>
    <scope>ACTIVITY REGULATION</scope>
    <scope>SUBCELLULAR LOCATION</scope>
</reference>
<reference key="5">
    <citation type="journal article" date="2003" name="Mol. Microbiol.">
        <title>Characterization of RAT, an autolysis regulator in Staphylococcus aureus.</title>
        <authorList>
            <person name="Ingavale S.S."/>
            <person name="Van Wamel W."/>
            <person name="Cheung A.L."/>
        </authorList>
    </citation>
    <scope>REGULATION BY MGRA</scope>
</reference>
<reference key="6">
    <citation type="journal article" date="2010" name="J. Bacteriol.">
        <title>Synthetic effects of secG and secY2 mutations on exoproteome biogenesis in Staphylococcus aureus.</title>
        <authorList>
            <person name="Sibbald M.J."/>
            <person name="Winter T."/>
            <person name="van der Kooi-Pol M.M."/>
            <person name="Buist G."/>
            <person name="Tsompanidou E."/>
            <person name="Bosma T."/>
            <person name="Schafer T."/>
            <person name="Ohlsen K."/>
            <person name="Hecker M."/>
            <person name="Antelmann H."/>
            <person name="Engelmann S."/>
            <person name="van Dijl J.M."/>
        </authorList>
    </citation>
    <scope>IDENTIFICATION BY MASS SPECTROMETRY</scope>
    <scope>SUBCELLULAR LOCATION</scope>
    <scope>INDUCTION</scope>
    <source>
        <strain>RN4220</strain>
    </source>
</reference>
<reference evidence="8" key="7">
    <citation type="journal article" date="2004" name="J. Mol. Biol.">
        <title>Latent LytM at 1.3A resolution.</title>
        <authorList>
            <person name="Odintsov S.G."/>
            <person name="Sabala I."/>
            <person name="Marcyjaniak M."/>
            <person name="Bochtler M."/>
        </authorList>
    </citation>
    <scope>X-RAY CRYSTALLOGRAPHY (1.3 ANGSTROMS) OF 26-316 IN COMPLEX WITH ZINC</scope>
    <scope>COFACTOR</scope>
    <scope>MUTAGENESIS OF ASN-117; HIS-210; ASP-214; HIS-291 AND HIS-293</scope>
</reference>
<keyword id="KW-0002">3D-structure</keyword>
<keyword id="KW-0961">Cell wall biogenesis/degradation</keyword>
<keyword id="KW-0903">Direct protein sequencing</keyword>
<keyword id="KW-0378">Hydrolase</keyword>
<keyword id="KW-0479">Metal-binding</keyword>
<keyword id="KW-0482">Metalloprotease</keyword>
<keyword id="KW-0645">Protease</keyword>
<keyword id="KW-1185">Reference proteome</keyword>
<keyword id="KW-0964">Secreted</keyword>
<keyword id="KW-0732">Signal</keyword>
<keyword id="KW-0843">Virulence</keyword>
<keyword id="KW-0862">Zinc</keyword>
<keyword id="KW-0865">Zymogen</keyword>